<gene>
    <name evidence="1" type="primary">rplX</name>
    <name type="ordered locus">Xfasm12_0505</name>
</gene>
<keyword id="KW-0687">Ribonucleoprotein</keyword>
<keyword id="KW-0689">Ribosomal protein</keyword>
<keyword id="KW-0694">RNA-binding</keyword>
<keyword id="KW-0699">rRNA-binding</keyword>
<name>RL24_XYLFM</name>
<dbReference type="EMBL" id="CP000941">
    <property type="protein sequence ID" value="ACA11514.1"/>
    <property type="status" value="ALT_INIT"/>
    <property type="molecule type" value="Genomic_DNA"/>
</dbReference>
<dbReference type="RefSeq" id="WP_004086577.1">
    <property type="nucleotide sequence ID" value="NC_010513.1"/>
</dbReference>
<dbReference type="SMR" id="B0U5L0"/>
<dbReference type="KEGG" id="xfm:Xfasm12_0505"/>
<dbReference type="HOGENOM" id="CLU_093315_2_2_6"/>
<dbReference type="GO" id="GO:1990904">
    <property type="term" value="C:ribonucleoprotein complex"/>
    <property type="evidence" value="ECO:0007669"/>
    <property type="project" value="UniProtKB-KW"/>
</dbReference>
<dbReference type="GO" id="GO:0005840">
    <property type="term" value="C:ribosome"/>
    <property type="evidence" value="ECO:0007669"/>
    <property type="project" value="UniProtKB-KW"/>
</dbReference>
<dbReference type="GO" id="GO:0019843">
    <property type="term" value="F:rRNA binding"/>
    <property type="evidence" value="ECO:0007669"/>
    <property type="project" value="UniProtKB-UniRule"/>
</dbReference>
<dbReference type="GO" id="GO:0003735">
    <property type="term" value="F:structural constituent of ribosome"/>
    <property type="evidence" value="ECO:0007669"/>
    <property type="project" value="InterPro"/>
</dbReference>
<dbReference type="GO" id="GO:0006412">
    <property type="term" value="P:translation"/>
    <property type="evidence" value="ECO:0007669"/>
    <property type="project" value="UniProtKB-UniRule"/>
</dbReference>
<dbReference type="CDD" id="cd06089">
    <property type="entry name" value="KOW_RPL26"/>
    <property type="match status" value="1"/>
</dbReference>
<dbReference type="FunFam" id="2.30.30.30:FF:000004">
    <property type="entry name" value="50S ribosomal protein L24"/>
    <property type="match status" value="1"/>
</dbReference>
<dbReference type="Gene3D" id="2.30.30.30">
    <property type="match status" value="1"/>
</dbReference>
<dbReference type="HAMAP" id="MF_01326_B">
    <property type="entry name" value="Ribosomal_uL24_B"/>
    <property type="match status" value="1"/>
</dbReference>
<dbReference type="InterPro" id="IPR005824">
    <property type="entry name" value="KOW"/>
</dbReference>
<dbReference type="InterPro" id="IPR014722">
    <property type="entry name" value="Rib_uL2_dom2"/>
</dbReference>
<dbReference type="InterPro" id="IPR003256">
    <property type="entry name" value="Ribosomal_uL24"/>
</dbReference>
<dbReference type="InterPro" id="IPR005825">
    <property type="entry name" value="Ribosomal_uL24_CS"/>
</dbReference>
<dbReference type="InterPro" id="IPR041988">
    <property type="entry name" value="Ribosomal_uL24_KOW"/>
</dbReference>
<dbReference type="InterPro" id="IPR008991">
    <property type="entry name" value="Translation_prot_SH3-like_sf"/>
</dbReference>
<dbReference type="NCBIfam" id="TIGR01079">
    <property type="entry name" value="rplX_bact"/>
    <property type="match status" value="1"/>
</dbReference>
<dbReference type="PANTHER" id="PTHR12903">
    <property type="entry name" value="MITOCHONDRIAL RIBOSOMAL PROTEIN L24"/>
    <property type="match status" value="1"/>
</dbReference>
<dbReference type="Pfam" id="PF00467">
    <property type="entry name" value="KOW"/>
    <property type="match status" value="1"/>
</dbReference>
<dbReference type="Pfam" id="PF17136">
    <property type="entry name" value="ribosomal_L24"/>
    <property type="match status" value="1"/>
</dbReference>
<dbReference type="SMART" id="SM00739">
    <property type="entry name" value="KOW"/>
    <property type="match status" value="1"/>
</dbReference>
<dbReference type="SUPFAM" id="SSF50104">
    <property type="entry name" value="Translation proteins SH3-like domain"/>
    <property type="match status" value="1"/>
</dbReference>
<dbReference type="PROSITE" id="PS01108">
    <property type="entry name" value="RIBOSOMAL_L24"/>
    <property type="match status" value="1"/>
</dbReference>
<sequence>MASRIKKGDQVIVIAGKDKGKQGEIIRIDGHRVVVSNVNIVKRHTKPNPQRGISGGLIDREAPIHVSNIQILNPMTGKGDRVGFKILDDGCKLRIFRSTGEVIGA</sequence>
<evidence type="ECO:0000255" key="1">
    <source>
        <dbReference type="HAMAP-Rule" id="MF_01326"/>
    </source>
</evidence>
<evidence type="ECO:0000305" key="2"/>
<feature type="chain" id="PRO_0000355730" description="Large ribosomal subunit protein uL24">
    <location>
        <begin position="1"/>
        <end position="105"/>
    </location>
</feature>
<accession>B0U5L0</accession>
<organism>
    <name type="scientific">Xylella fastidiosa (strain M12)</name>
    <dbReference type="NCBI Taxonomy" id="405440"/>
    <lineage>
        <taxon>Bacteria</taxon>
        <taxon>Pseudomonadati</taxon>
        <taxon>Pseudomonadota</taxon>
        <taxon>Gammaproteobacteria</taxon>
        <taxon>Lysobacterales</taxon>
        <taxon>Lysobacteraceae</taxon>
        <taxon>Xylella</taxon>
    </lineage>
</organism>
<comment type="function">
    <text evidence="1">One of two assembly initiator proteins, it binds directly to the 5'-end of the 23S rRNA, where it nucleates assembly of the 50S subunit.</text>
</comment>
<comment type="function">
    <text evidence="1">One of the proteins that surrounds the polypeptide exit tunnel on the outside of the subunit.</text>
</comment>
<comment type="subunit">
    <text evidence="1">Part of the 50S ribosomal subunit.</text>
</comment>
<comment type="similarity">
    <text evidence="1">Belongs to the universal ribosomal protein uL24 family.</text>
</comment>
<comment type="sequence caution" evidence="2">
    <conflict type="erroneous initiation">
        <sequence resource="EMBL-CDS" id="ACA11514"/>
    </conflict>
</comment>
<proteinExistence type="inferred from homology"/>
<protein>
    <recommendedName>
        <fullName evidence="1">Large ribosomal subunit protein uL24</fullName>
    </recommendedName>
    <alternativeName>
        <fullName evidence="2">50S ribosomal protein L24</fullName>
    </alternativeName>
</protein>
<reference key="1">
    <citation type="journal article" date="2010" name="J. Bacteriol.">
        <title>Whole genome sequences of two Xylella fastidiosa strains (M12 and M23) causing almond leaf scorch disease in California.</title>
        <authorList>
            <person name="Chen J."/>
            <person name="Xie G."/>
            <person name="Han S."/>
            <person name="Chertkov O."/>
            <person name="Sims D."/>
            <person name="Civerolo E.L."/>
        </authorList>
    </citation>
    <scope>NUCLEOTIDE SEQUENCE [LARGE SCALE GENOMIC DNA]</scope>
    <source>
        <strain>M12</strain>
    </source>
</reference>